<accession>Q54E71</accession>
<reference key="1">
    <citation type="journal article" date="2005" name="Nature">
        <title>The genome of the social amoeba Dictyostelium discoideum.</title>
        <authorList>
            <person name="Eichinger L."/>
            <person name="Pachebat J.A."/>
            <person name="Gloeckner G."/>
            <person name="Rajandream M.A."/>
            <person name="Sucgang R."/>
            <person name="Berriman M."/>
            <person name="Song J."/>
            <person name="Olsen R."/>
            <person name="Szafranski K."/>
            <person name="Xu Q."/>
            <person name="Tunggal B."/>
            <person name="Kummerfeld S."/>
            <person name="Madera M."/>
            <person name="Konfortov B.A."/>
            <person name="Rivero F."/>
            <person name="Bankier A.T."/>
            <person name="Lehmann R."/>
            <person name="Hamlin N."/>
            <person name="Davies R."/>
            <person name="Gaudet P."/>
            <person name="Fey P."/>
            <person name="Pilcher K."/>
            <person name="Chen G."/>
            <person name="Saunders D."/>
            <person name="Sodergren E.J."/>
            <person name="Davis P."/>
            <person name="Kerhornou A."/>
            <person name="Nie X."/>
            <person name="Hall N."/>
            <person name="Anjard C."/>
            <person name="Hemphill L."/>
            <person name="Bason N."/>
            <person name="Farbrother P."/>
            <person name="Desany B."/>
            <person name="Just E."/>
            <person name="Morio T."/>
            <person name="Rost R."/>
            <person name="Churcher C.M."/>
            <person name="Cooper J."/>
            <person name="Haydock S."/>
            <person name="van Driessche N."/>
            <person name="Cronin A."/>
            <person name="Goodhead I."/>
            <person name="Muzny D.M."/>
            <person name="Mourier T."/>
            <person name="Pain A."/>
            <person name="Lu M."/>
            <person name="Harper D."/>
            <person name="Lindsay R."/>
            <person name="Hauser H."/>
            <person name="James K.D."/>
            <person name="Quiles M."/>
            <person name="Madan Babu M."/>
            <person name="Saito T."/>
            <person name="Buchrieser C."/>
            <person name="Wardroper A."/>
            <person name="Felder M."/>
            <person name="Thangavelu M."/>
            <person name="Johnson D."/>
            <person name="Knights A."/>
            <person name="Loulseged H."/>
            <person name="Mungall K.L."/>
            <person name="Oliver K."/>
            <person name="Price C."/>
            <person name="Quail M.A."/>
            <person name="Urushihara H."/>
            <person name="Hernandez J."/>
            <person name="Rabbinowitsch E."/>
            <person name="Steffen D."/>
            <person name="Sanders M."/>
            <person name="Ma J."/>
            <person name="Kohara Y."/>
            <person name="Sharp S."/>
            <person name="Simmonds M.N."/>
            <person name="Spiegler S."/>
            <person name="Tivey A."/>
            <person name="Sugano S."/>
            <person name="White B."/>
            <person name="Walker D."/>
            <person name="Woodward J.R."/>
            <person name="Winckler T."/>
            <person name="Tanaka Y."/>
            <person name="Shaulsky G."/>
            <person name="Schleicher M."/>
            <person name="Weinstock G.M."/>
            <person name="Rosenthal A."/>
            <person name="Cox E.C."/>
            <person name="Chisholm R.L."/>
            <person name="Gibbs R.A."/>
            <person name="Loomis W.F."/>
            <person name="Platzer M."/>
            <person name="Kay R.R."/>
            <person name="Williams J.G."/>
            <person name="Dear P.H."/>
            <person name="Noegel A.A."/>
            <person name="Barrell B.G."/>
            <person name="Kuspa A."/>
        </authorList>
    </citation>
    <scope>NUCLEOTIDE SEQUENCE [LARGE SCALE GENOMIC DNA]</scope>
    <source>
        <strain>AX4</strain>
    </source>
</reference>
<sequence>MNNIFAYKEIESPIDDQICKDYKTKYANPSIPIIIDNGSYQCRAGFANDISPKLIFRSLVGKVKSTSSPIVGNSLKEGDISRLTIKSPFDSNLLVHPPSQESIFDYIFHKFGIENEIENPVLITEPTSNPTFCRKYMSELLFECYNIKSVVYGIDSLFSFYGQRDQFKDGGKNSLIIGSSFNTTHIYNVQNYNVSHQQTKRINIGGGASTDYLRKLIHLKYPKHKSYFTQNYTNKIKEEHCYVSQGQYIEELKEFENDQLAKEKSVIIQLPYQEIDFEKLEEERQRKIQNRKDLGAKLRELADKKRLEKKTELEDKLASLESILALKTTNVEEFQQTLKSKSYATEKDLIRDIDDLKDKLFGKKKESEQVEDTEEFPLLFIADSELNADQLKEKKKQRQLKSMKDGRLAQKRKRDEEKEKEKEKEEERDRQEEESFLKDPEHYLKDLHSRKSKILEKREARQKQKQKANIVQRNSRLRTIVNPTNHGNYGEKGEEVEDPEEAEESREMAILDKLLNKFDPTSISSAIVSHDDQFPIGEYHTAEDFQVSLGVERIKCPETLFQPKAIIGVDQMGLVEAIISSILSQLPVDTRKLVTENIFLTGGNVNTKHFKDRIHYEIQQIREPYSPLTILKSKDSQLDAWLGARKWCLDNQDNWSNVSISKQDYQEKGYDYIKSHFASNLSLN</sequence>
<gene>
    <name type="primary">arpE</name>
    <name type="synonym">actr5</name>
    <name type="ORF">DDB_G0291728</name>
</gene>
<feature type="chain" id="PRO_0000328716" description="Actin-related protein 5">
    <location>
        <begin position="1"/>
        <end position="684"/>
    </location>
</feature>
<feature type="region of interest" description="Disordered" evidence="3">
    <location>
        <begin position="392"/>
        <end position="443"/>
    </location>
</feature>
<feature type="region of interest" description="Disordered" evidence="3">
    <location>
        <begin position="481"/>
        <end position="500"/>
    </location>
</feature>
<feature type="coiled-coil region" evidence="2">
    <location>
        <begin position="262"/>
        <end position="469"/>
    </location>
</feature>
<feature type="compositionally biased region" description="Basic and acidic residues" evidence="3">
    <location>
        <begin position="402"/>
        <end position="443"/>
    </location>
</feature>
<keyword id="KW-0175">Coiled coil</keyword>
<keyword id="KW-0227">DNA damage</keyword>
<keyword id="KW-0233">DNA recombination</keyword>
<keyword id="KW-0234">DNA repair</keyword>
<keyword id="KW-0539">Nucleus</keyword>
<keyword id="KW-1185">Reference proteome</keyword>
<keyword id="KW-0804">Transcription</keyword>
<keyword id="KW-0805">Transcription regulation</keyword>
<dbReference type="EMBL" id="AAFI02000182">
    <property type="protein sequence ID" value="EAL61560.1"/>
    <property type="molecule type" value="Genomic_DNA"/>
</dbReference>
<dbReference type="RefSeq" id="XP_629991.1">
    <property type="nucleotide sequence ID" value="XM_629989.1"/>
</dbReference>
<dbReference type="SMR" id="Q54E71"/>
<dbReference type="FunCoup" id="Q54E71">
    <property type="interactions" value="328"/>
</dbReference>
<dbReference type="STRING" id="44689.Q54E71"/>
<dbReference type="PaxDb" id="44689-DDB0234009"/>
<dbReference type="EnsemblProtists" id="EAL61560">
    <property type="protein sequence ID" value="EAL61560"/>
    <property type="gene ID" value="DDB_G0291728"/>
</dbReference>
<dbReference type="GeneID" id="8628321"/>
<dbReference type="KEGG" id="ddi:DDB_G0291728"/>
<dbReference type="dictyBase" id="DDB_G0291728">
    <property type="gene designation" value="arpE"/>
</dbReference>
<dbReference type="VEuPathDB" id="AmoebaDB:DDB_G0291728"/>
<dbReference type="eggNOG" id="KOG0681">
    <property type="taxonomic scope" value="Eukaryota"/>
</dbReference>
<dbReference type="HOGENOM" id="CLU_008246_1_0_1"/>
<dbReference type="InParanoid" id="Q54E71"/>
<dbReference type="OMA" id="YPFTEHV"/>
<dbReference type="PhylomeDB" id="Q54E71"/>
<dbReference type="PRO" id="PR:Q54E71"/>
<dbReference type="Proteomes" id="UP000002195">
    <property type="component" value="Chromosome 6"/>
</dbReference>
<dbReference type="GO" id="GO:0005737">
    <property type="term" value="C:cytoplasm"/>
    <property type="evidence" value="ECO:0000318"/>
    <property type="project" value="GO_Central"/>
</dbReference>
<dbReference type="GO" id="GO:0031011">
    <property type="term" value="C:Ino80 complex"/>
    <property type="evidence" value="ECO:0000318"/>
    <property type="project" value="GO_Central"/>
</dbReference>
<dbReference type="GO" id="GO:0006310">
    <property type="term" value="P:DNA recombination"/>
    <property type="evidence" value="ECO:0007669"/>
    <property type="project" value="UniProtKB-KW"/>
</dbReference>
<dbReference type="GO" id="GO:0006281">
    <property type="term" value="P:DNA repair"/>
    <property type="evidence" value="ECO:0007669"/>
    <property type="project" value="UniProtKB-KW"/>
</dbReference>
<dbReference type="GO" id="GO:0006355">
    <property type="term" value="P:regulation of DNA-templated transcription"/>
    <property type="evidence" value="ECO:0000318"/>
    <property type="project" value="GO_Central"/>
</dbReference>
<dbReference type="CDD" id="cd10211">
    <property type="entry name" value="ASKHA_NBD_Arp5"/>
    <property type="match status" value="1"/>
</dbReference>
<dbReference type="FunFam" id="3.90.640.10:FF:000190">
    <property type="entry name" value="Actin-related protein 5"/>
    <property type="match status" value="1"/>
</dbReference>
<dbReference type="FunFam" id="3.30.420.40:FF:000122">
    <property type="entry name" value="ARP5 actin-related protein 5 homolog"/>
    <property type="match status" value="1"/>
</dbReference>
<dbReference type="FunFam" id="3.30.420.40:FF:000058">
    <property type="entry name" value="Putative actin-related protein 5"/>
    <property type="match status" value="1"/>
</dbReference>
<dbReference type="Gene3D" id="3.30.420.40">
    <property type="match status" value="3"/>
</dbReference>
<dbReference type="Gene3D" id="3.90.640.10">
    <property type="entry name" value="Actin, Chain A, domain 4"/>
    <property type="match status" value="2"/>
</dbReference>
<dbReference type="InterPro" id="IPR004000">
    <property type="entry name" value="Actin"/>
</dbReference>
<dbReference type="InterPro" id="IPR043129">
    <property type="entry name" value="ATPase_NBD"/>
</dbReference>
<dbReference type="PANTHER" id="PTHR11937">
    <property type="entry name" value="ACTIN"/>
    <property type="match status" value="1"/>
</dbReference>
<dbReference type="Pfam" id="PF00022">
    <property type="entry name" value="Actin"/>
    <property type="match status" value="2"/>
</dbReference>
<dbReference type="SMART" id="SM00268">
    <property type="entry name" value="ACTIN"/>
    <property type="match status" value="1"/>
</dbReference>
<dbReference type="SUPFAM" id="SSF53067">
    <property type="entry name" value="Actin-like ATPase domain"/>
    <property type="match status" value="2"/>
</dbReference>
<name>ARP5_DICDI</name>
<protein>
    <recommendedName>
        <fullName>Actin-related protein 5</fullName>
    </recommendedName>
    <alternativeName>
        <fullName>Actin-related protein E</fullName>
    </alternativeName>
</protein>
<comment type="function">
    <text evidence="1">Proposed core component of the chromatin remodeling Ino80 complex which is involved in transcriptional regulation, DNA replication and probably DNA repair.</text>
</comment>
<comment type="subunit">
    <text evidence="1">Component of the chromatin-remodeling Ino80 complex.</text>
</comment>
<comment type="subcellular location">
    <subcellularLocation>
        <location evidence="1">Nucleus</location>
    </subcellularLocation>
</comment>
<comment type="similarity">
    <text evidence="4">Belongs to the actin family. ARP5 subfamily.</text>
</comment>
<proteinExistence type="inferred from homology"/>
<evidence type="ECO:0000250" key="1"/>
<evidence type="ECO:0000255" key="2"/>
<evidence type="ECO:0000256" key="3">
    <source>
        <dbReference type="SAM" id="MobiDB-lite"/>
    </source>
</evidence>
<evidence type="ECO:0000305" key="4"/>
<organism>
    <name type="scientific">Dictyostelium discoideum</name>
    <name type="common">Social amoeba</name>
    <dbReference type="NCBI Taxonomy" id="44689"/>
    <lineage>
        <taxon>Eukaryota</taxon>
        <taxon>Amoebozoa</taxon>
        <taxon>Evosea</taxon>
        <taxon>Eumycetozoa</taxon>
        <taxon>Dictyostelia</taxon>
        <taxon>Dictyosteliales</taxon>
        <taxon>Dictyosteliaceae</taxon>
        <taxon>Dictyostelium</taxon>
    </lineage>
</organism>